<keyword id="KW-0067">ATP-binding</keyword>
<keyword id="KW-0547">Nucleotide-binding</keyword>
<keyword id="KW-0808">Transferase</keyword>
<dbReference type="EC" id="2.4.2.52" evidence="1"/>
<dbReference type="EMBL" id="AL513382">
    <property type="protein sequence ID" value="CAD01218.1"/>
    <property type="molecule type" value="Genomic_DNA"/>
</dbReference>
<dbReference type="EMBL" id="AE014613">
    <property type="protein sequence ID" value="AAO67798.1"/>
    <property type="molecule type" value="Genomic_DNA"/>
</dbReference>
<dbReference type="RefSeq" id="NP_454674.1">
    <property type="nucleotide sequence ID" value="NC_003198.1"/>
</dbReference>
<dbReference type="STRING" id="220341.gene:17584120"/>
<dbReference type="KEGG" id="stt:t0065"/>
<dbReference type="KEGG" id="sty:STY0072"/>
<dbReference type="PATRIC" id="fig|220341.7.peg.72"/>
<dbReference type="eggNOG" id="COG1767">
    <property type="taxonomic scope" value="Bacteria"/>
</dbReference>
<dbReference type="HOGENOM" id="CLU_056179_1_0_6"/>
<dbReference type="OMA" id="FFIMGHD"/>
<dbReference type="OrthoDB" id="114886at2"/>
<dbReference type="Proteomes" id="UP000000541">
    <property type="component" value="Chromosome"/>
</dbReference>
<dbReference type="Proteomes" id="UP000002670">
    <property type="component" value="Chromosome"/>
</dbReference>
<dbReference type="GO" id="GO:0005524">
    <property type="term" value="F:ATP binding"/>
    <property type="evidence" value="ECO:0007669"/>
    <property type="project" value="UniProtKB-KW"/>
</dbReference>
<dbReference type="GO" id="GO:0046917">
    <property type="term" value="F:triphosphoribosyl-dephospho-CoA synthase activity"/>
    <property type="evidence" value="ECO:0007669"/>
    <property type="project" value="UniProtKB-UniRule"/>
</dbReference>
<dbReference type="GO" id="GO:0051191">
    <property type="term" value="P:prosthetic group biosynthetic process"/>
    <property type="evidence" value="ECO:0007669"/>
    <property type="project" value="TreeGrafter"/>
</dbReference>
<dbReference type="FunFam" id="1.10.4200.10:FF:000001">
    <property type="entry name" value="Triphosphoribosyl-dephospho-CoA synthase CitG"/>
    <property type="match status" value="1"/>
</dbReference>
<dbReference type="Gene3D" id="1.10.4200.10">
    <property type="entry name" value="Triphosphoribosyl-dephospho-CoA protein"/>
    <property type="match status" value="1"/>
</dbReference>
<dbReference type="HAMAP" id="MF_00397">
    <property type="entry name" value="CitG"/>
    <property type="match status" value="1"/>
</dbReference>
<dbReference type="InterPro" id="IPR002736">
    <property type="entry name" value="CitG"/>
</dbReference>
<dbReference type="InterPro" id="IPR017551">
    <property type="entry name" value="TriPribosyl-deP-CoA_syn_CitG"/>
</dbReference>
<dbReference type="NCBIfam" id="TIGR03125">
    <property type="entry name" value="citrate_citG"/>
    <property type="match status" value="1"/>
</dbReference>
<dbReference type="PANTHER" id="PTHR30201:SF2">
    <property type="entry name" value="2-(5''-TRIPHOSPHORIBOSYL)-3'-DEPHOSPHOCOENZYME-A SYNTHASE"/>
    <property type="match status" value="1"/>
</dbReference>
<dbReference type="PANTHER" id="PTHR30201">
    <property type="entry name" value="TRIPHOSPHORIBOSYL-DEPHOSPHO-COA SYNTHASE"/>
    <property type="match status" value="1"/>
</dbReference>
<dbReference type="Pfam" id="PF01874">
    <property type="entry name" value="CitG"/>
    <property type="match status" value="1"/>
</dbReference>
<organism>
    <name type="scientific">Salmonella typhi</name>
    <dbReference type="NCBI Taxonomy" id="90370"/>
    <lineage>
        <taxon>Bacteria</taxon>
        <taxon>Pseudomonadati</taxon>
        <taxon>Pseudomonadota</taxon>
        <taxon>Gammaproteobacteria</taxon>
        <taxon>Enterobacterales</taxon>
        <taxon>Enterobacteriaceae</taxon>
        <taxon>Salmonella</taxon>
    </lineage>
</organism>
<sequence>MNVSVVTERRTPAYSSLAAGELNGLVARALLTEARLTPKPGLVDIRNSGAHRDMDLAAFERSTTAIAPWMEKFFIMGNNTAALAAENVLVMLRPLGMACENDMLQATNGVNTHRGAIFAFGLLSAAIGRLLARGEPLEQNRICDQVARLSRNIVAHELSARKAGKLTKSETHFQCYGLSGARGEAESGFRTVRTQALPVFNRVVQEHDDTHLALLQTLLHLMAWNDDTNLVSRGGLEGLYYVQQQAQKLLWQGGVLVEGGIEAMQFLDDELILRNLSPGGSADLLAVTWFLSHFPAGSLYPE</sequence>
<reference key="1">
    <citation type="journal article" date="2001" name="Nature">
        <title>Complete genome sequence of a multiple drug resistant Salmonella enterica serovar Typhi CT18.</title>
        <authorList>
            <person name="Parkhill J."/>
            <person name="Dougan G."/>
            <person name="James K.D."/>
            <person name="Thomson N.R."/>
            <person name="Pickard D."/>
            <person name="Wain J."/>
            <person name="Churcher C.M."/>
            <person name="Mungall K.L."/>
            <person name="Bentley S.D."/>
            <person name="Holden M.T.G."/>
            <person name="Sebaihia M."/>
            <person name="Baker S."/>
            <person name="Basham D."/>
            <person name="Brooks K."/>
            <person name="Chillingworth T."/>
            <person name="Connerton P."/>
            <person name="Cronin A."/>
            <person name="Davis P."/>
            <person name="Davies R.M."/>
            <person name="Dowd L."/>
            <person name="White N."/>
            <person name="Farrar J."/>
            <person name="Feltwell T."/>
            <person name="Hamlin N."/>
            <person name="Haque A."/>
            <person name="Hien T.T."/>
            <person name="Holroyd S."/>
            <person name="Jagels K."/>
            <person name="Krogh A."/>
            <person name="Larsen T.S."/>
            <person name="Leather S."/>
            <person name="Moule S."/>
            <person name="O'Gaora P."/>
            <person name="Parry C."/>
            <person name="Quail M.A."/>
            <person name="Rutherford K.M."/>
            <person name="Simmonds M."/>
            <person name="Skelton J."/>
            <person name="Stevens K."/>
            <person name="Whitehead S."/>
            <person name="Barrell B.G."/>
        </authorList>
    </citation>
    <scope>NUCLEOTIDE SEQUENCE [LARGE SCALE GENOMIC DNA]</scope>
    <source>
        <strain>CT18</strain>
    </source>
</reference>
<reference key="2">
    <citation type="journal article" date="2003" name="J. Bacteriol.">
        <title>Comparative genomics of Salmonella enterica serovar Typhi strains Ty2 and CT18.</title>
        <authorList>
            <person name="Deng W."/>
            <person name="Liou S.-R."/>
            <person name="Plunkett G. III"/>
            <person name="Mayhew G.F."/>
            <person name="Rose D.J."/>
            <person name="Burland V."/>
            <person name="Kodoyianni V."/>
            <person name="Schwartz D.C."/>
            <person name="Blattner F.R."/>
        </authorList>
    </citation>
    <scope>NUCLEOTIDE SEQUENCE [LARGE SCALE GENOMIC DNA]</scope>
    <source>
        <strain>ATCC 700931 / Ty2</strain>
    </source>
</reference>
<comment type="catalytic activity">
    <reaction evidence="1">
        <text>3'-dephospho-CoA + ATP = 2'-(5''-triphospho-alpha-D-ribosyl)-3'-dephospho-CoA + adenine</text>
        <dbReference type="Rhea" id="RHEA:15117"/>
        <dbReference type="ChEBI" id="CHEBI:16708"/>
        <dbReference type="ChEBI" id="CHEBI:30616"/>
        <dbReference type="ChEBI" id="CHEBI:57328"/>
        <dbReference type="ChEBI" id="CHEBI:61378"/>
        <dbReference type="EC" id="2.4.2.52"/>
    </reaction>
</comment>
<comment type="similarity">
    <text evidence="1">Belongs to the CitG/MdcB family.</text>
</comment>
<name>CITG1_SALTI</name>
<accession>Q8Z9M0</accession>
<accession>Q7CBV9</accession>
<gene>
    <name evidence="1" type="primary">citG1</name>
    <name type="ordered locus">STY0072</name>
    <name type="ordered locus">t0065</name>
</gene>
<protein>
    <recommendedName>
        <fullName evidence="1">Probable 2-(5''-triphosphoribosyl)-3'-dephosphocoenzyme-A synthase 1</fullName>
        <shortName evidence="1">2-(5''-triphosphoribosyl)-3'-dephospho-CoA synthase 1</shortName>
        <ecNumber evidence="1">2.4.2.52</ecNumber>
    </recommendedName>
</protein>
<feature type="chain" id="PRO_0000255411" description="Probable 2-(5''-triphosphoribosyl)-3'-dephosphocoenzyme-A synthase 1">
    <location>
        <begin position="1"/>
        <end position="302"/>
    </location>
</feature>
<evidence type="ECO:0000255" key="1">
    <source>
        <dbReference type="HAMAP-Rule" id="MF_00397"/>
    </source>
</evidence>
<proteinExistence type="inferred from homology"/>